<sequence>MIQRMSKLFVRTLREDPADAEVPSHRLLVRAGYIRRVAPGIYSWLPLGYAVLRKIEEIVRQEMLHIGGQEVHFPALIPREIYEASGRWNEYGDTLFRLKDRKGADYLLGPTHEELFTLLVKGEYSSYKDYPVILFQIQTKYRDEARPRAGILRGREFVMKDSYSFDLDDAGLAASYTAHREAYRRIFDRLGLRYRIVSAVSGAMGGSASEEFLAVTEVGEDAFVYCRNCDYAANTEAVEIGVPDRLDPTGQPPPQVLDTPDTPTIDALVDRLNSLDLGRRFTAADTLKNVVLKTKAPGADDWELLVVGVPGDRDVDLKRLAGQLDPIQVEPATAEDLARRPELVRGYIGPQILRRIGVRYLVDPLVVPGSAWVTGANEPDKHMANVVRGRDFEPDGEIGAATIRDGDPCGRCGGRLALAQGIEIGHIFQLGRKYTDAFELDALGPDGRPIRITMGSYGIGVSRAVAAIAEQCHDDAGLIWPRSVSPADVHVVIAGKGEQEKLAEEFAAALDTAGLDVLLDDRVDASAGVKFADAELIGIPSIAVVGRGAARGVVEVRDRGSGERRELALTDAVAELRTLAAGA</sequence>
<proteinExistence type="inferred from homology"/>
<comment type="function">
    <text evidence="1">Catalyzes the attachment of proline to tRNA(Pro) in a two-step reaction: proline is first activated by ATP to form Pro-AMP and then transferred to the acceptor end of tRNA(Pro). As ProRS can inadvertently accommodate and process non-cognate amino acids such as alanine and cysteine, to avoid such errors it has two additional distinct editing activities against alanine. One activity is designated as 'pretransfer' editing and involves the tRNA(Pro)-independent hydrolysis of activated Ala-AMP. The other activity is designated 'posttransfer' editing and involves deacylation of mischarged Ala-tRNA(Pro). The misacylated Cys-tRNA(Pro) is not edited by ProRS.</text>
</comment>
<comment type="catalytic activity">
    <reaction evidence="1">
        <text>tRNA(Pro) + L-proline + ATP = L-prolyl-tRNA(Pro) + AMP + diphosphate</text>
        <dbReference type="Rhea" id="RHEA:14305"/>
        <dbReference type="Rhea" id="RHEA-COMP:9700"/>
        <dbReference type="Rhea" id="RHEA-COMP:9702"/>
        <dbReference type="ChEBI" id="CHEBI:30616"/>
        <dbReference type="ChEBI" id="CHEBI:33019"/>
        <dbReference type="ChEBI" id="CHEBI:60039"/>
        <dbReference type="ChEBI" id="CHEBI:78442"/>
        <dbReference type="ChEBI" id="CHEBI:78532"/>
        <dbReference type="ChEBI" id="CHEBI:456215"/>
        <dbReference type="EC" id="6.1.1.15"/>
    </reaction>
</comment>
<comment type="subunit">
    <text evidence="1">Homodimer.</text>
</comment>
<comment type="subcellular location">
    <subcellularLocation>
        <location evidence="1">Cytoplasm</location>
    </subcellularLocation>
</comment>
<comment type="domain">
    <text evidence="1">Consists of three domains: the N-terminal catalytic domain, the editing domain and the C-terminal anticodon-binding domain.</text>
</comment>
<comment type="similarity">
    <text evidence="1">Belongs to the class-II aminoacyl-tRNA synthetase family. ProS type 1 subfamily.</text>
</comment>
<gene>
    <name evidence="1" type="primary">proS</name>
    <name type="ordered locus">Acel_1519</name>
</gene>
<accession>A0LV31</accession>
<reference key="1">
    <citation type="journal article" date="2009" name="Genome Res.">
        <title>Complete genome of the cellulolytic thermophile Acidothermus cellulolyticus 11B provides insights into its ecophysiological and evolutionary adaptations.</title>
        <authorList>
            <person name="Barabote R.D."/>
            <person name="Xie G."/>
            <person name="Leu D.H."/>
            <person name="Normand P."/>
            <person name="Necsulea A."/>
            <person name="Daubin V."/>
            <person name="Medigue C."/>
            <person name="Adney W.S."/>
            <person name="Xu X.C."/>
            <person name="Lapidus A."/>
            <person name="Parales R.E."/>
            <person name="Detter C."/>
            <person name="Pujic P."/>
            <person name="Bruce D."/>
            <person name="Lavire C."/>
            <person name="Challacombe J.F."/>
            <person name="Brettin T.S."/>
            <person name="Berry A.M."/>
        </authorList>
    </citation>
    <scope>NUCLEOTIDE SEQUENCE [LARGE SCALE GENOMIC DNA]</scope>
    <source>
        <strain>ATCC 43068 / DSM 8971 / 11B</strain>
    </source>
</reference>
<name>SYP_ACIC1</name>
<feature type="chain" id="PRO_0000288303" description="Proline--tRNA ligase">
    <location>
        <begin position="1"/>
        <end position="583"/>
    </location>
</feature>
<keyword id="KW-0030">Aminoacyl-tRNA synthetase</keyword>
<keyword id="KW-0067">ATP-binding</keyword>
<keyword id="KW-0963">Cytoplasm</keyword>
<keyword id="KW-0436">Ligase</keyword>
<keyword id="KW-0547">Nucleotide-binding</keyword>
<keyword id="KW-0648">Protein biosynthesis</keyword>
<keyword id="KW-1185">Reference proteome</keyword>
<protein>
    <recommendedName>
        <fullName evidence="1">Proline--tRNA ligase</fullName>
        <ecNumber evidence="1">6.1.1.15</ecNumber>
    </recommendedName>
    <alternativeName>
        <fullName evidence="1">Prolyl-tRNA synthetase</fullName>
        <shortName evidence="1">ProRS</shortName>
    </alternativeName>
</protein>
<dbReference type="EC" id="6.1.1.15" evidence="1"/>
<dbReference type="EMBL" id="CP000481">
    <property type="protein sequence ID" value="ABK53291.1"/>
    <property type="molecule type" value="Genomic_DNA"/>
</dbReference>
<dbReference type="RefSeq" id="WP_011720354.1">
    <property type="nucleotide sequence ID" value="NC_008578.1"/>
</dbReference>
<dbReference type="SMR" id="A0LV31"/>
<dbReference type="FunCoup" id="A0LV31">
    <property type="interactions" value="207"/>
</dbReference>
<dbReference type="STRING" id="351607.Acel_1519"/>
<dbReference type="KEGG" id="ace:Acel_1519"/>
<dbReference type="eggNOG" id="COG0442">
    <property type="taxonomic scope" value="Bacteria"/>
</dbReference>
<dbReference type="HOGENOM" id="CLU_016739_0_0_11"/>
<dbReference type="InParanoid" id="A0LV31"/>
<dbReference type="OrthoDB" id="9809052at2"/>
<dbReference type="Proteomes" id="UP000008221">
    <property type="component" value="Chromosome"/>
</dbReference>
<dbReference type="GO" id="GO:0005829">
    <property type="term" value="C:cytosol"/>
    <property type="evidence" value="ECO:0007669"/>
    <property type="project" value="TreeGrafter"/>
</dbReference>
<dbReference type="GO" id="GO:0002161">
    <property type="term" value="F:aminoacyl-tRNA deacylase activity"/>
    <property type="evidence" value="ECO:0007669"/>
    <property type="project" value="InterPro"/>
</dbReference>
<dbReference type="GO" id="GO:0005524">
    <property type="term" value="F:ATP binding"/>
    <property type="evidence" value="ECO:0007669"/>
    <property type="project" value="UniProtKB-UniRule"/>
</dbReference>
<dbReference type="GO" id="GO:0004827">
    <property type="term" value="F:proline-tRNA ligase activity"/>
    <property type="evidence" value="ECO:0007669"/>
    <property type="project" value="UniProtKB-UniRule"/>
</dbReference>
<dbReference type="GO" id="GO:0006433">
    <property type="term" value="P:prolyl-tRNA aminoacylation"/>
    <property type="evidence" value="ECO:0007669"/>
    <property type="project" value="UniProtKB-UniRule"/>
</dbReference>
<dbReference type="CDD" id="cd00861">
    <property type="entry name" value="ProRS_anticodon_short"/>
    <property type="match status" value="1"/>
</dbReference>
<dbReference type="CDD" id="cd00779">
    <property type="entry name" value="ProRS_core_prok"/>
    <property type="match status" value="1"/>
</dbReference>
<dbReference type="FunFam" id="3.30.930.10:FF:000065">
    <property type="entry name" value="Proline--tRNA ligase"/>
    <property type="match status" value="1"/>
</dbReference>
<dbReference type="FunFam" id="3.30.930.10:FF:000070">
    <property type="entry name" value="Proline--tRNA ligase"/>
    <property type="match status" value="1"/>
</dbReference>
<dbReference type="Gene3D" id="3.40.50.800">
    <property type="entry name" value="Anticodon-binding domain"/>
    <property type="match status" value="1"/>
</dbReference>
<dbReference type="Gene3D" id="3.30.930.10">
    <property type="entry name" value="Bira Bifunctional Protein, Domain 2"/>
    <property type="match status" value="2"/>
</dbReference>
<dbReference type="Gene3D" id="3.90.960.10">
    <property type="entry name" value="YbaK/aminoacyl-tRNA synthetase-associated domain"/>
    <property type="match status" value="1"/>
</dbReference>
<dbReference type="HAMAP" id="MF_01569">
    <property type="entry name" value="Pro_tRNA_synth_type1"/>
    <property type="match status" value="1"/>
</dbReference>
<dbReference type="InterPro" id="IPR002314">
    <property type="entry name" value="aa-tRNA-synt_IIb"/>
</dbReference>
<dbReference type="InterPro" id="IPR006195">
    <property type="entry name" value="aa-tRNA-synth_II"/>
</dbReference>
<dbReference type="InterPro" id="IPR045864">
    <property type="entry name" value="aa-tRNA-synth_II/BPL/LPL"/>
</dbReference>
<dbReference type="InterPro" id="IPR004154">
    <property type="entry name" value="Anticodon-bd"/>
</dbReference>
<dbReference type="InterPro" id="IPR036621">
    <property type="entry name" value="Anticodon-bd_dom_sf"/>
</dbReference>
<dbReference type="InterPro" id="IPR002316">
    <property type="entry name" value="Pro-tRNA-ligase_IIa"/>
</dbReference>
<dbReference type="InterPro" id="IPR004500">
    <property type="entry name" value="Pro-tRNA-synth_IIa_bac-type"/>
</dbReference>
<dbReference type="InterPro" id="IPR023717">
    <property type="entry name" value="Pro-tRNA-Synthase_IIa_type1"/>
</dbReference>
<dbReference type="InterPro" id="IPR050062">
    <property type="entry name" value="Pro-tRNA_synthetase"/>
</dbReference>
<dbReference type="InterPro" id="IPR044140">
    <property type="entry name" value="ProRS_anticodon_short"/>
</dbReference>
<dbReference type="InterPro" id="IPR033730">
    <property type="entry name" value="ProRS_core_prok"/>
</dbReference>
<dbReference type="InterPro" id="IPR036754">
    <property type="entry name" value="YbaK/aa-tRNA-synt-asso_dom_sf"/>
</dbReference>
<dbReference type="InterPro" id="IPR007214">
    <property type="entry name" value="YbaK/aa-tRNA-synth-assoc-dom"/>
</dbReference>
<dbReference type="NCBIfam" id="NF006625">
    <property type="entry name" value="PRK09194.1"/>
    <property type="match status" value="1"/>
</dbReference>
<dbReference type="NCBIfam" id="TIGR00409">
    <property type="entry name" value="proS_fam_II"/>
    <property type="match status" value="1"/>
</dbReference>
<dbReference type="PANTHER" id="PTHR42753">
    <property type="entry name" value="MITOCHONDRIAL RIBOSOME PROTEIN L39/PROLYL-TRNA LIGASE FAMILY MEMBER"/>
    <property type="match status" value="1"/>
</dbReference>
<dbReference type="PANTHER" id="PTHR42753:SF2">
    <property type="entry name" value="PROLINE--TRNA LIGASE"/>
    <property type="match status" value="1"/>
</dbReference>
<dbReference type="Pfam" id="PF03129">
    <property type="entry name" value="HGTP_anticodon"/>
    <property type="match status" value="1"/>
</dbReference>
<dbReference type="Pfam" id="PF00587">
    <property type="entry name" value="tRNA-synt_2b"/>
    <property type="match status" value="1"/>
</dbReference>
<dbReference type="Pfam" id="PF04073">
    <property type="entry name" value="tRNA_edit"/>
    <property type="match status" value="1"/>
</dbReference>
<dbReference type="PRINTS" id="PR01046">
    <property type="entry name" value="TRNASYNTHPRO"/>
</dbReference>
<dbReference type="SUPFAM" id="SSF52954">
    <property type="entry name" value="Class II aaRS ABD-related"/>
    <property type="match status" value="1"/>
</dbReference>
<dbReference type="SUPFAM" id="SSF55681">
    <property type="entry name" value="Class II aaRS and biotin synthetases"/>
    <property type="match status" value="1"/>
</dbReference>
<dbReference type="SUPFAM" id="SSF55826">
    <property type="entry name" value="YbaK/ProRS associated domain"/>
    <property type="match status" value="1"/>
</dbReference>
<dbReference type="PROSITE" id="PS50862">
    <property type="entry name" value="AA_TRNA_LIGASE_II"/>
    <property type="match status" value="1"/>
</dbReference>
<organism>
    <name type="scientific">Acidothermus cellulolyticus (strain ATCC 43068 / DSM 8971 / 11B)</name>
    <dbReference type="NCBI Taxonomy" id="351607"/>
    <lineage>
        <taxon>Bacteria</taxon>
        <taxon>Bacillati</taxon>
        <taxon>Actinomycetota</taxon>
        <taxon>Actinomycetes</taxon>
        <taxon>Acidothermales</taxon>
        <taxon>Acidothermaceae</taxon>
        <taxon>Acidothermus</taxon>
    </lineage>
</organism>
<evidence type="ECO:0000255" key="1">
    <source>
        <dbReference type="HAMAP-Rule" id="MF_01569"/>
    </source>
</evidence>